<comment type="function">
    <text evidence="1">One of the primary rRNA binding proteins, it binds directly to 16S rRNA where it nucleates assembly of the head domain of the 30S subunit.</text>
</comment>
<comment type="subunit">
    <text evidence="1">Part of the 30S ribosomal subunit.</text>
</comment>
<comment type="subcellular location">
    <subcellularLocation>
        <location>Plastid</location>
        <location>Chloroplast</location>
    </subcellularLocation>
</comment>
<comment type="similarity">
    <text evidence="3">Belongs to the universal ribosomal protein uS7 family.</text>
</comment>
<accession>A4QLP0</accession>
<protein>
    <recommendedName>
        <fullName evidence="2">Small ribosomal subunit protein uS7cz/uS7cy</fullName>
    </recommendedName>
    <alternativeName>
        <fullName>30S ribosomal protein S7, chloroplastic</fullName>
    </alternativeName>
</protein>
<name>RR7_LOBMA</name>
<sequence>MSRRGTAEEKTAKSDPIYRNRLVNMLVNRILKHGKKSLAYQIIYRALKKIQQKTETNPLSVLRQAIRGVTPDIAVKARRVGGSTHQVPIEIGSTQGKALAIRWLLGASRKRPGRNMAFKLSSELVDAAKGSGDAIRKKEETHRMAEANRAFAHFR</sequence>
<feature type="chain" id="PRO_0000344347" description="Small ribosomal subunit protein uS7cz/uS7cy">
    <location>
        <begin position="1"/>
        <end position="155"/>
    </location>
</feature>
<proteinExistence type="inferred from homology"/>
<evidence type="ECO:0000250" key="1"/>
<evidence type="ECO:0000255" key="2">
    <source>
        <dbReference type="HAMAP-Rule" id="MF_00480"/>
    </source>
</evidence>
<evidence type="ECO:0000305" key="3"/>
<dbReference type="EMBL" id="AP009375">
    <property type="protein sequence ID" value="BAF50595.1"/>
    <property type="molecule type" value="Genomic_DNA"/>
</dbReference>
<dbReference type="EMBL" id="AP009375">
    <property type="protein sequence ID" value="BAF50612.1"/>
    <property type="molecule type" value="Genomic_DNA"/>
</dbReference>
<dbReference type="SMR" id="A4QLP0"/>
<dbReference type="GO" id="GO:0009507">
    <property type="term" value="C:chloroplast"/>
    <property type="evidence" value="ECO:0007669"/>
    <property type="project" value="UniProtKB-SubCell"/>
</dbReference>
<dbReference type="GO" id="GO:0015935">
    <property type="term" value="C:small ribosomal subunit"/>
    <property type="evidence" value="ECO:0007669"/>
    <property type="project" value="InterPro"/>
</dbReference>
<dbReference type="GO" id="GO:0019843">
    <property type="term" value="F:rRNA binding"/>
    <property type="evidence" value="ECO:0007669"/>
    <property type="project" value="UniProtKB-UniRule"/>
</dbReference>
<dbReference type="GO" id="GO:0003735">
    <property type="term" value="F:structural constituent of ribosome"/>
    <property type="evidence" value="ECO:0007669"/>
    <property type="project" value="InterPro"/>
</dbReference>
<dbReference type="GO" id="GO:0006412">
    <property type="term" value="P:translation"/>
    <property type="evidence" value="ECO:0007669"/>
    <property type="project" value="UniProtKB-UniRule"/>
</dbReference>
<dbReference type="CDD" id="cd14871">
    <property type="entry name" value="uS7_Chloroplast"/>
    <property type="match status" value="1"/>
</dbReference>
<dbReference type="FunFam" id="1.10.455.10:FF:000001">
    <property type="entry name" value="30S ribosomal protein S7"/>
    <property type="match status" value="1"/>
</dbReference>
<dbReference type="Gene3D" id="1.10.455.10">
    <property type="entry name" value="Ribosomal protein S7 domain"/>
    <property type="match status" value="1"/>
</dbReference>
<dbReference type="HAMAP" id="MF_00480_B">
    <property type="entry name" value="Ribosomal_uS7_B"/>
    <property type="match status" value="1"/>
</dbReference>
<dbReference type="InterPro" id="IPR000235">
    <property type="entry name" value="Ribosomal_uS7"/>
</dbReference>
<dbReference type="InterPro" id="IPR005717">
    <property type="entry name" value="Ribosomal_uS7_bac/org-type"/>
</dbReference>
<dbReference type="InterPro" id="IPR020606">
    <property type="entry name" value="Ribosomal_uS7_CS"/>
</dbReference>
<dbReference type="InterPro" id="IPR023798">
    <property type="entry name" value="Ribosomal_uS7_dom"/>
</dbReference>
<dbReference type="InterPro" id="IPR036823">
    <property type="entry name" value="Ribosomal_uS7_dom_sf"/>
</dbReference>
<dbReference type="NCBIfam" id="TIGR01029">
    <property type="entry name" value="rpsG_bact"/>
    <property type="match status" value="1"/>
</dbReference>
<dbReference type="PANTHER" id="PTHR11205">
    <property type="entry name" value="RIBOSOMAL PROTEIN S7"/>
    <property type="match status" value="1"/>
</dbReference>
<dbReference type="Pfam" id="PF00177">
    <property type="entry name" value="Ribosomal_S7"/>
    <property type="match status" value="1"/>
</dbReference>
<dbReference type="PIRSF" id="PIRSF002122">
    <property type="entry name" value="RPS7p_RPS7a_RPS5e_RPS7o"/>
    <property type="match status" value="1"/>
</dbReference>
<dbReference type="SUPFAM" id="SSF47973">
    <property type="entry name" value="Ribosomal protein S7"/>
    <property type="match status" value="1"/>
</dbReference>
<dbReference type="PROSITE" id="PS00052">
    <property type="entry name" value="RIBOSOMAL_S7"/>
    <property type="match status" value="1"/>
</dbReference>
<geneLocation type="chloroplast"/>
<keyword id="KW-0150">Chloroplast</keyword>
<keyword id="KW-0934">Plastid</keyword>
<keyword id="KW-0687">Ribonucleoprotein</keyword>
<keyword id="KW-0689">Ribosomal protein</keyword>
<keyword id="KW-0694">RNA-binding</keyword>
<keyword id="KW-0699">rRNA-binding</keyword>
<reference key="1">
    <citation type="submission" date="2007-03" db="EMBL/GenBank/DDBJ databases">
        <title>Sequencing analysis of Lobularia maritima chloroplast DNA.</title>
        <authorList>
            <person name="Hosouchi T."/>
            <person name="Tsuruoka H."/>
            <person name="Kotani H."/>
        </authorList>
    </citation>
    <scope>NUCLEOTIDE SEQUENCE [LARGE SCALE GENOMIC DNA]</scope>
</reference>
<gene>
    <name type="primary">rps7-A</name>
</gene>
<gene>
    <name type="primary">rps7-B</name>
</gene>
<organism>
    <name type="scientific">Lobularia maritima</name>
    <name type="common">Sweet alyssum</name>
    <name type="synonym">Alyssum maritimum</name>
    <dbReference type="NCBI Taxonomy" id="226051"/>
    <lineage>
        <taxon>Eukaryota</taxon>
        <taxon>Viridiplantae</taxon>
        <taxon>Streptophyta</taxon>
        <taxon>Embryophyta</taxon>
        <taxon>Tracheophyta</taxon>
        <taxon>Spermatophyta</taxon>
        <taxon>Magnoliopsida</taxon>
        <taxon>eudicotyledons</taxon>
        <taxon>Gunneridae</taxon>
        <taxon>Pentapetalae</taxon>
        <taxon>rosids</taxon>
        <taxon>malvids</taxon>
        <taxon>Brassicales</taxon>
        <taxon>Brassicaceae</taxon>
        <taxon>Anastaticeae</taxon>
        <taxon>Lobularia</taxon>
    </lineage>
</organism>